<gene>
    <name type="primary">IL12B</name>
</gene>
<comment type="function">
    <text evidence="1">Cytokine that can act as a growth factor for activated T and NK cells, enhance the lytic activity of NK/lymphokine-activated killer cells, and stimulate the production of IFN-gamma by resting PBMC.</text>
</comment>
<comment type="function">
    <text evidence="1">Associates with IL23A to form the IL-23 interleukin, a heterodimeric cytokine which functions in innate and adaptive immunity. IL-23 may constitute with IL-17 an acute response to infection in peripheral tissues. IL-23 binds to a heterodimeric receptor complex composed of IL12RB1 and IL23R, activates the Jak-Stat signaling cascade, stimulates memory rather than naive T-cells and promotes production of pro-inflammatory cytokines. IL-23 induces autoimmune inflammation and thus may be responsible for autoimmune inflammatory diseases and may be important for tumorigenesis (By similarity).</text>
</comment>
<comment type="subunit">
    <text evidence="2 3">Heterodimer with IL12A; disulfide-linked. The heterodimer is known as interleukin IL-12. Heterodimer with IL23A; disulfide-linked. The heterodimer is known as interleukin IL-23. Also secreted as a monomer. Interacts with NBR1; this interaction promotes IL-12 secretion (By similarity).</text>
</comment>
<comment type="subcellular location">
    <subcellularLocation>
        <location>Secreted</location>
    </subcellularLocation>
</comment>
<comment type="similarity">
    <text evidence="7">Belongs to the IL-12B family.</text>
</comment>
<name>IL12B_PIG</name>
<dbReference type="EMBL" id="U08317">
    <property type="protein sequence ID" value="AAA75356.1"/>
    <property type="molecule type" value="mRNA"/>
</dbReference>
<dbReference type="RefSeq" id="NP_999178.1">
    <property type="nucleotide sequence ID" value="NM_214013.1"/>
</dbReference>
<dbReference type="SMR" id="Q28938"/>
<dbReference type="FunCoup" id="Q28938">
    <property type="interactions" value="212"/>
</dbReference>
<dbReference type="STRING" id="9823.ENSSSCP00000045805"/>
<dbReference type="GlyCosmos" id="Q28938">
    <property type="glycosylation" value="3 sites, No reported glycans"/>
</dbReference>
<dbReference type="GlyGen" id="Q28938">
    <property type="glycosylation" value="3 sites"/>
</dbReference>
<dbReference type="PaxDb" id="9823-ENSSSCP00000018057"/>
<dbReference type="Ensembl" id="ENSSSCT00000037637.3">
    <property type="protein sequence ID" value="ENSSSCP00000045805.1"/>
    <property type="gene ID" value="ENSSSCG00000017044.5"/>
</dbReference>
<dbReference type="Ensembl" id="ENSSSCT00025028589.1">
    <property type="protein sequence ID" value="ENSSSCP00025012111.1"/>
    <property type="gene ID" value="ENSSSCG00025020985.1"/>
</dbReference>
<dbReference type="Ensembl" id="ENSSSCT00035012808.1">
    <property type="protein sequence ID" value="ENSSSCP00035004320.1"/>
    <property type="gene ID" value="ENSSSCG00035010234.1"/>
</dbReference>
<dbReference type="Ensembl" id="ENSSSCT00045036812.1">
    <property type="protein sequence ID" value="ENSSSCP00045025604.1"/>
    <property type="gene ID" value="ENSSSCG00045021517.1"/>
</dbReference>
<dbReference type="Ensembl" id="ENSSSCT00065086362.1">
    <property type="protein sequence ID" value="ENSSSCP00065037763.1"/>
    <property type="gene ID" value="ENSSSCG00065062939.1"/>
</dbReference>
<dbReference type="Ensembl" id="ENSSSCT00090009231">
    <property type="protein sequence ID" value="ENSSSCP00090005559"/>
    <property type="gene ID" value="ENSSSCG00090005279"/>
</dbReference>
<dbReference type="Ensembl" id="ENSSSCT00105031799">
    <property type="protein sequence ID" value="ENSSSCP00105022344"/>
    <property type="gene ID" value="ENSSSCG00105016465"/>
</dbReference>
<dbReference type="Ensembl" id="ENSSSCT00115012308">
    <property type="protein sequence ID" value="ENSSSCP00115011621"/>
    <property type="gene ID" value="ENSSSCG00115007058"/>
</dbReference>
<dbReference type="GeneID" id="397076"/>
<dbReference type="KEGG" id="ssc:397076"/>
<dbReference type="CTD" id="3593"/>
<dbReference type="VGNC" id="VGNC:89079">
    <property type="gene designation" value="IL12B"/>
</dbReference>
<dbReference type="eggNOG" id="ENOG502RZMA">
    <property type="taxonomic scope" value="Eukaryota"/>
</dbReference>
<dbReference type="GeneTree" id="ENSGT00390000012630"/>
<dbReference type="HOGENOM" id="CLU_071206_1_0_1"/>
<dbReference type="InParanoid" id="Q28938"/>
<dbReference type="OMA" id="EANNYSG"/>
<dbReference type="OrthoDB" id="8670716at2759"/>
<dbReference type="TreeFam" id="TF334829"/>
<dbReference type="Reactome" id="R-SSC-9020591">
    <property type="pathway name" value="Interleukin-12 signaling"/>
</dbReference>
<dbReference type="Reactome" id="R-SSC-9020933">
    <property type="pathway name" value="Interleukin-23 signaling"/>
</dbReference>
<dbReference type="Proteomes" id="UP000008227">
    <property type="component" value="Chromosome 16"/>
</dbReference>
<dbReference type="Proteomes" id="UP000314985">
    <property type="component" value="Unplaced"/>
</dbReference>
<dbReference type="Proteomes" id="UP000694570">
    <property type="component" value="Unplaced"/>
</dbReference>
<dbReference type="Proteomes" id="UP000694571">
    <property type="component" value="Unplaced"/>
</dbReference>
<dbReference type="Proteomes" id="UP000694720">
    <property type="component" value="Unplaced"/>
</dbReference>
<dbReference type="Proteomes" id="UP000694722">
    <property type="component" value="Unplaced"/>
</dbReference>
<dbReference type="Proteomes" id="UP000694723">
    <property type="component" value="Unplaced"/>
</dbReference>
<dbReference type="Proteomes" id="UP000694724">
    <property type="component" value="Unplaced"/>
</dbReference>
<dbReference type="Proteomes" id="UP000694725">
    <property type="component" value="Unplaced"/>
</dbReference>
<dbReference type="Proteomes" id="UP000694726">
    <property type="component" value="Unplaced"/>
</dbReference>
<dbReference type="Proteomes" id="UP000694727">
    <property type="component" value="Unplaced"/>
</dbReference>
<dbReference type="Proteomes" id="UP000694728">
    <property type="component" value="Unplaced"/>
</dbReference>
<dbReference type="Bgee" id="ENSSSCG00000017044">
    <property type="expression patterns" value="Expressed in oocyte and 4 other cell types or tissues"/>
</dbReference>
<dbReference type="GO" id="GO:0009986">
    <property type="term" value="C:cell surface"/>
    <property type="evidence" value="ECO:0007669"/>
    <property type="project" value="Ensembl"/>
</dbReference>
<dbReference type="GO" id="GO:0005737">
    <property type="term" value="C:cytoplasm"/>
    <property type="evidence" value="ECO:0007669"/>
    <property type="project" value="Ensembl"/>
</dbReference>
<dbReference type="GO" id="GO:0043514">
    <property type="term" value="C:interleukin-12 complex"/>
    <property type="evidence" value="ECO:0000318"/>
    <property type="project" value="GO_Central"/>
</dbReference>
<dbReference type="GO" id="GO:0070743">
    <property type="term" value="C:interleukin-23 complex"/>
    <property type="evidence" value="ECO:0007669"/>
    <property type="project" value="Ensembl"/>
</dbReference>
<dbReference type="GO" id="GO:0016020">
    <property type="term" value="C:membrane"/>
    <property type="evidence" value="ECO:0007669"/>
    <property type="project" value="InterPro"/>
</dbReference>
<dbReference type="GO" id="GO:0005125">
    <property type="term" value="F:cytokine activity"/>
    <property type="evidence" value="ECO:0007669"/>
    <property type="project" value="UniProtKB-KW"/>
</dbReference>
<dbReference type="GO" id="GO:0004896">
    <property type="term" value="F:cytokine receptor activity"/>
    <property type="evidence" value="ECO:0007669"/>
    <property type="project" value="InterPro"/>
</dbReference>
<dbReference type="GO" id="GO:0008083">
    <property type="term" value="F:growth factor activity"/>
    <property type="evidence" value="ECO:0007669"/>
    <property type="project" value="Ensembl"/>
</dbReference>
<dbReference type="GO" id="GO:0042802">
    <property type="term" value="F:identical protein binding"/>
    <property type="evidence" value="ECO:0007669"/>
    <property type="project" value="Ensembl"/>
</dbReference>
<dbReference type="GO" id="GO:0042164">
    <property type="term" value="F:interleukin-12 alpha subunit binding"/>
    <property type="evidence" value="ECO:0000318"/>
    <property type="project" value="GO_Central"/>
</dbReference>
<dbReference type="GO" id="GO:0005143">
    <property type="term" value="F:interleukin-12 receptor binding"/>
    <property type="evidence" value="ECO:0000318"/>
    <property type="project" value="GO_Central"/>
</dbReference>
<dbReference type="GO" id="GO:0045519">
    <property type="term" value="F:interleukin-23 receptor binding"/>
    <property type="evidence" value="ECO:0007669"/>
    <property type="project" value="Ensembl"/>
</dbReference>
<dbReference type="GO" id="GO:0046982">
    <property type="term" value="F:protein heterodimerization activity"/>
    <property type="evidence" value="ECO:0007669"/>
    <property type="project" value="Ensembl"/>
</dbReference>
<dbReference type="GO" id="GO:0016477">
    <property type="term" value="P:cell migration"/>
    <property type="evidence" value="ECO:0007669"/>
    <property type="project" value="Ensembl"/>
</dbReference>
<dbReference type="GO" id="GO:0007259">
    <property type="term" value="P:cell surface receptor signaling pathway via JAK-STAT"/>
    <property type="evidence" value="ECO:0007669"/>
    <property type="project" value="Ensembl"/>
</dbReference>
<dbReference type="GO" id="GO:0071222">
    <property type="term" value="P:cellular response to lipopolysaccharide"/>
    <property type="evidence" value="ECO:0007669"/>
    <property type="project" value="Ensembl"/>
</dbReference>
<dbReference type="GO" id="GO:0071346">
    <property type="term" value="P:cellular response to type II interferon"/>
    <property type="evidence" value="ECO:0007669"/>
    <property type="project" value="Ensembl"/>
</dbReference>
<dbReference type="GO" id="GO:0050829">
    <property type="term" value="P:defense response to Gram-negative bacterium"/>
    <property type="evidence" value="ECO:0007669"/>
    <property type="project" value="Ensembl"/>
</dbReference>
<dbReference type="GO" id="GO:0042832">
    <property type="term" value="P:defense response to protozoan"/>
    <property type="evidence" value="ECO:0007669"/>
    <property type="project" value="Ensembl"/>
</dbReference>
<dbReference type="GO" id="GO:0051607">
    <property type="term" value="P:defense response to virus"/>
    <property type="evidence" value="ECO:0007669"/>
    <property type="project" value="Ensembl"/>
</dbReference>
<dbReference type="GO" id="GO:0035722">
    <property type="term" value="P:interleukin-12-mediated signaling pathway"/>
    <property type="evidence" value="ECO:0000318"/>
    <property type="project" value="GO_Central"/>
</dbReference>
<dbReference type="GO" id="GO:0030101">
    <property type="term" value="P:natural killer cell activation"/>
    <property type="evidence" value="ECO:0007669"/>
    <property type="project" value="Ensembl"/>
</dbReference>
<dbReference type="GO" id="GO:1903588">
    <property type="term" value="P:negative regulation of blood vessel endothelial cell proliferation involved in sprouting angiogenesis"/>
    <property type="evidence" value="ECO:0007669"/>
    <property type="project" value="Ensembl"/>
</dbReference>
<dbReference type="GO" id="GO:0002862">
    <property type="term" value="P:negative regulation of inflammatory response to antigenic stimulus"/>
    <property type="evidence" value="ECO:0007669"/>
    <property type="project" value="Ensembl"/>
</dbReference>
<dbReference type="GO" id="GO:0032693">
    <property type="term" value="P:negative regulation of interleukin-10 production"/>
    <property type="evidence" value="ECO:0007669"/>
    <property type="project" value="Ensembl"/>
</dbReference>
<dbReference type="GO" id="GO:0032700">
    <property type="term" value="P:negative regulation of interleukin-17 production"/>
    <property type="evidence" value="ECO:0007669"/>
    <property type="project" value="Ensembl"/>
</dbReference>
<dbReference type="GO" id="GO:0050709">
    <property type="term" value="P:negative regulation of protein secretion"/>
    <property type="evidence" value="ECO:0007669"/>
    <property type="project" value="Ensembl"/>
</dbReference>
<dbReference type="GO" id="GO:0048662">
    <property type="term" value="P:negative regulation of smooth muscle cell proliferation"/>
    <property type="evidence" value="ECO:0007669"/>
    <property type="project" value="Ensembl"/>
</dbReference>
<dbReference type="GO" id="GO:1900747">
    <property type="term" value="P:negative regulation of vascular endothelial growth factor signaling pathway"/>
    <property type="evidence" value="ECO:0007669"/>
    <property type="project" value="Ensembl"/>
</dbReference>
<dbReference type="GO" id="GO:0042104">
    <property type="term" value="P:positive regulation of activated T cell proliferation"/>
    <property type="evidence" value="ECO:0007669"/>
    <property type="project" value="Ensembl"/>
</dbReference>
<dbReference type="GO" id="GO:0002230">
    <property type="term" value="P:positive regulation of defense response to virus by host"/>
    <property type="evidence" value="ECO:0007669"/>
    <property type="project" value="Ensembl"/>
</dbReference>
<dbReference type="GO" id="GO:0032725">
    <property type="term" value="P:positive regulation of granulocyte macrophage colony-stimulating factor production"/>
    <property type="evidence" value="ECO:0007669"/>
    <property type="project" value="Ensembl"/>
</dbReference>
<dbReference type="GO" id="GO:0032733">
    <property type="term" value="P:positive regulation of interleukin-10 production"/>
    <property type="evidence" value="ECO:0007669"/>
    <property type="project" value="Ensembl"/>
</dbReference>
<dbReference type="GO" id="GO:0032735">
    <property type="term" value="P:positive regulation of interleukin-12 production"/>
    <property type="evidence" value="ECO:0007669"/>
    <property type="project" value="Ensembl"/>
</dbReference>
<dbReference type="GO" id="GO:0032740">
    <property type="term" value="P:positive regulation of interleukin-17 production"/>
    <property type="evidence" value="ECO:0007669"/>
    <property type="project" value="Ensembl"/>
</dbReference>
<dbReference type="GO" id="GO:0002860">
    <property type="term" value="P:positive regulation of natural killer cell mediated cytotoxicity directed against tumor cell target"/>
    <property type="evidence" value="ECO:0007669"/>
    <property type="project" value="Ensembl"/>
</dbReference>
<dbReference type="GO" id="GO:0032819">
    <property type="term" value="P:positive regulation of natural killer cell proliferation"/>
    <property type="evidence" value="ECO:0007669"/>
    <property type="project" value="Ensembl"/>
</dbReference>
<dbReference type="GO" id="GO:0051142">
    <property type="term" value="P:positive regulation of NK T cell proliferation"/>
    <property type="evidence" value="ECO:0007669"/>
    <property type="project" value="Ensembl"/>
</dbReference>
<dbReference type="GO" id="GO:0045672">
    <property type="term" value="P:positive regulation of osteoclast differentiation"/>
    <property type="evidence" value="ECO:0007669"/>
    <property type="project" value="Ensembl"/>
</dbReference>
<dbReference type="GO" id="GO:0034393">
    <property type="term" value="P:positive regulation of smooth muscle cell apoptotic process"/>
    <property type="evidence" value="ECO:0007669"/>
    <property type="project" value="Ensembl"/>
</dbReference>
<dbReference type="GO" id="GO:0001916">
    <property type="term" value="P:positive regulation of T cell mediated cytotoxicity"/>
    <property type="evidence" value="ECO:0007669"/>
    <property type="project" value="Ensembl"/>
</dbReference>
<dbReference type="GO" id="GO:0002827">
    <property type="term" value="P:positive regulation of T-helper 1 type immune response"/>
    <property type="evidence" value="ECO:0007669"/>
    <property type="project" value="Ensembl"/>
</dbReference>
<dbReference type="GO" id="GO:0032760">
    <property type="term" value="P:positive regulation of tumor necrosis factor production"/>
    <property type="evidence" value="ECO:0007669"/>
    <property type="project" value="Ensembl"/>
</dbReference>
<dbReference type="GO" id="GO:0032729">
    <property type="term" value="P:positive regulation of type II interferon production"/>
    <property type="evidence" value="ECO:0007669"/>
    <property type="project" value="Ensembl"/>
</dbReference>
<dbReference type="GO" id="GO:0010224">
    <property type="term" value="P:response to UV-B"/>
    <property type="evidence" value="ECO:0007669"/>
    <property type="project" value="Ensembl"/>
</dbReference>
<dbReference type="GO" id="GO:0042098">
    <property type="term" value="P:T cell proliferation"/>
    <property type="evidence" value="ECO:0007669"/>
    <property type="project" value="Ensembl"/>
</dbReference>
<dbReference type="GO" id="GO:0042093">
    <property type="term" value="P:T-helper cell differentiation"/>
    <property type="evidence" value="ECO:0007669"/>
    <property type="project" value="Ensembl"/>
</dbReference>
<dbReference type="CDD" id="cd00063">
    <property type="entry name" value="FN3"/>
    <property type="match status" value="1"/>
</dbReference>
<dbReference type="FunFam" id="2.60.40.10:FF:000959">
    <property type="entry name" value="Interleukin-12 subunit beta"/>
    <property type="match status" value="1"/>
</dbReference>
<dbReference type="FunFam" id="2.60.40.10:FF:001008">
    <property type="entry name" value="Interleukin-12 subunit beta"/>
    <property type="match status" value="1"/>
</dbReference>
<dbReference type="FunFam" id="2.60.40.10:FF:001009">
    <property type="entry name" value="Interleukin-12 subunit beta"/>
    <property type="match status" value="1"/>
</dbReference>
<dbReference type="Gene3D" id="2.60.40.10">
    <property type="entry name" value="Immunoglobulins"/>
    <property type="match status" value="3"/>
</dbReference>
<dbReference type="InterPro" id="IPR003961">
    <property type="entry name" value="FN3_dom"/>
</dbReference>
<dbReference type="InterPro" id="IPR036116">
    <property type="entry name" value="FN3_sf"/>
</dbReference>
<dbReference type="InterPro" id="IPR003530">
    <property type="entry name" value="Hematopoietin_rcpt_L_F3_CS"/>
</dbReference>
<dbReference type="InterPro" id="IPR007110">
    <property type="entry name" value="Ig-like_dom"/>
</dbReference>
<dbReference type="InterPro" id="IPR036179">
    <property type="entry name" value="Ig-like_dom_sf"/>
</dbReference>
<dbReference type="InterPro" id="IPR013783">
    <property type="entry name" value="Ig-like_fold"/>
</dbReference>
<dbReference type="InterPro" id="IPR003598">
    <property type="entry name" value="Ig_sub2"/>
</dbReference>
<dbReference type="InterPro" id="IPR050676">
    <property type="entry name" value="IL-12"/>
</dbReference>
<dbReference type="InterPro" id="IPR015528">
    <property type="entry name" value="IL-12_beta"/>
</dbReference>
<dbReference type="InterPro" id="IPR019482">
    <property type="entry name" value="IL-12_beta_cen-dom"/>
</dbReference>
<dbReference type="PANTHER" id="PTHR48485:SF4">
    <property type="entry name" value="INTERLEUKIN-12 SUBUNIT BETA"/>
    <property type="match status" value="1"/>
</dbReference>
<dbReference type="PANTHER" id="PTHR48485">
    <property type="entry name" value="INTERLEUKIN-12 SUBUNIT BETA-RELATED"/>
    <property type="match status" value="1"/>
</dbReference>
<dbReference type="Pfam" id="PF10420">
    <property type="entry name" value="IL12p40_C"/>
    <property type="match status" value="1"/>
</dbReference>
<dbReference type="PIRSF" id="PIRSF038007">
    <property type="entry name" value="IL_12_beta"/>
    <property type="match status" value="1"/>
</dbReference>
<dbReference type="PRINTS" id="PR01928">
    <property type="entry name" value="INTRLEUKN12B"/>
</dbReference>
<dbReference type="SMART" id="SM00408">
    <property type="entry name" value="IGc2"/>
    <property type="match status" value="1"/>
</dbReference>
<dbReference type="SUPFAM" id="SSF49265">
    <property type="entry name" value="Fibronectin type III"/>
    <property type="match status" value="2"/>
</dbReference>
<dbReference type="SUPFAM" id="SSF48726">
    <property type="entry name" value="Immunoglobulin"/>
    <property type="match status" value="1"/>
</dbReference>
<dbReference type="PROSITE" id="PS50853">
    <property type="entry name" value="FN3"/>
    <property type="match status" value="1"/>
</dbReference>
<dbReference type="PROSITE" id="PS01354">
    <property type="entry name" value="HEMATOPO_REC_L_F3"/>
    <property type="match status" value="1"/>
</dbReference>
<dbReference type="PROSITE" id="PS50835">
    <property type="entry name" value="IG_LIKE"/>
    <property type="match status" value="1"/>
</dbReference>
<protein>
    <recommendedName>
        <fullName>Interleukin-12 subunit beta</fullName>
        <shortName>IL-12B</shortName>
    </recommendedName>
    <alternativeName>
        <fullName>Cytotoxic lymphocyte maturation factor 40 kDa subunit</fullName>
        <shortName>CLMF p40</shortName>
    </alternativeName>
    <alternativeName>
        <fullName>IL-12 subunit p40</fullName>
    </alternativeName>
</protein>
<proteinExistence type="evidence at transcript level"/>
<accession>Q28938</accession>
<evidence type="ECO:0000250" key="1"/>
<evidence type="ECO:0000250" key="2">
    <source>
        <dbReference type="UniProtKB" id="P29460"/>
    </source>
</evidence>
<evidence type="ECO:0000250" key="3">
    <source>
        <dbReference type="UniProtKB" id="P43432"/>
    </source>
</evidence>
<evidence type="ECO:0000255" key="4"/>
<evidence type="ECO:0000255" key="5">
    <source>
        <dbReference type="PROSITE-ProRule" id="PRU00114"/>
    </source>
</evidence>
<evidence type="ECO:0000255" key="6">
    <source>
        <dbReference type="PROSITE-ProRule" id="PRU00316"/>
    </source>
</evidence>
<evidence type="ECO:0000305" key="7"/>
<keyword id="KW-0202">Cytokine</keyword>
<keyword id="KW-1015">Disulfide bond</keyword>
<keyword id="KW-0325">Glycoprotein</keyword>
<keyword id="KW-0393">Immunoglobulin domain</keyword>
<keyword id="KW-1185">Reference proteome</keyword>
<keyword id="KW-0964">Secreted</keyword>
<keyword id="KW-0732">Signal</keyword>
<sequence>MHLQQLVVSWFSLVWLASPIVAIWELEKNVYVVELDWYPNAPGEMVVLTCNTPEEDGITWTSDQSSEVLGTGKTLTIHVKEFGDAGQYTCRKGGAVLSQSLLLLHKKEDGIWSTDILKDQKEPKNKSFLKCEAKNYSGRFTCWWLTAISTDLKFSVKSSRGSTDPRGVTCGTATLSEDLGEYKKYRVECQEGSACPAAEESLPIEVVLEAVHKLKYENYTSSFFIRDIIKPDPPKNLQLNPLKNSRHVEISWEYPDTWSTPHSYFSLMFGVQVQGKNKREKKDKLFTDQISAKVTCHKDANIRVQARDRYYSSSWSEWASVSCN</sequence>
<reference key="1">
    <citation type="journal article" date="1997" name="Vet. Immunol. Immunopathol.">
        <title>Molecular cloning and mRNA expression of porcine interleukin-12.</title>
        <authorList>
            <person name="Foss D.L."/>
            <person name="Murtaugh M.P."/>
        </authorList>
    </citation>
    <scope>NUCLEOTIDE SEQUENCE [MRNA]</scope>
    <source>
        <tissue>Spleen</tissue>
    </source>
</reference>
<organism>
    <name type="scientific">Sus scrofa</name>
    <name type="common">Pig</name>
    <dbReference type="NCBI Taxonomy" id="9823"/>
    <lineage>
        <taxon>Eukaryota</taxon>
        <taxon>Metazoa</taxon>
        <taxon>Chordata</taxon>
        <taxon>Craniata</taxon>
        <taxon>Vertebrata</taxon>
        <taxon>Euteleostomi</taxon>
        <taxon>Mammalia</taxon>
        <taxon>Eutheria</taxon>
        <taxon>Laurasiatheria</taxon>
        <taxon>Artiodactyla</taxon>
        <taxon>Suina</taxon>
        <taxon>Suidae</taxon>
        <taxon>Sus</taxon>
    </lineage>
</organism>
<feature type="signal peptide" evidence="1">
    <location>
        <begin position="1"/>
        <end position="22"/>
    </location>
</feature>
<feature type="chain" id="PRO_0000010935" description="Interleukin-12 subunit beta">
    <location>
        <begin position="23"/>
        <end position="324"/>
    </location>
</feature>
<feature type="domain" description="Ig-like C2-type">
    <location>
        <begin position="23"/>
        <end position="106"/>
    </location>
</feature>
<feature type="domain" description="Fibronectin type-III" evidence="6">
    <location>
        <begin position="233"/>
        <end position="324"/>
    </location>
</feature>
<feature type="glycosylation site" description="N-linked (GlcNAc...) asparagine" evidence="4">
    <location>
        <position position="125"/>
    </location>
</feature>
<feature type="glycosylation site" description="N-linked (GlcNAc...) asparagine" evidence="4">
    <location>
        <position position="135"/>
    </location>
</feature>
<feature type="glycosylation site" description="N-linked (GlcNAc...) asparagine" evidence="4">
    <location>
        <position position="218"/>
    </location>
</feature>
<feature type="disulfide bond" evidence="5">
    <location>
        <begin position="50"/>
        <end position="90"/>
    </location>
</feature>
<feature type="disulfide bond" description="Interchain (with C-99 in IL12A and C-76 in IL23A)" evidence="2 5">
    <location>
        <position position="195"/>
    </location>
</feature>